<proteinExistence type="inferred from homology"/>
<reference key="1">
    <citation type="journal article" date="2006" name="PLoS Genet.">
        <title>Genome sequence of Rickettsia bellii illuminates the role of amoebae in gene exchanges between intracellular pathogens.</title>
        <authorList>
            <person name="Ogata H."/>
            <person name="La Scola B."/>
            <person name="Audic S."/>
            <person name="Renesto P."/>
            <person name="Blanc G."/>
            <person name="Robert C."/>
            <person name="Fournier P.-E."/>
            <person name="Claverie J.-M."/>
            <person name="Raoult D."/>
        </authorList>
    </citation>
    <scope>NUCLEOTIDE SEQUENCE [LARGE SCALE GENOMIC DNA]</scope>
    <source>
        <strain>RML369-C</strain>
    </source>
</reference>
<comment type="function">
    <text evidence="1">Ferredoxins are iron-sulfur proteins that transfer electrons in a wide variety of metabolic reactions.</text>
</comment>
<comment type="cofactor">
    <cofactor evidence="1">
        <name>[4Fe-4S] cluster</name>
        <dbReference type="ChEBI" id="CHEBI:49883"/>
    </cofactor>
    <text evidence="1">Binds 1 [4Fe-4S] cluster.</text>
</comment>
<comment type="cofactor">
    <cofactor evidence="1">
        <name>[3Fe-4S] cluster</name>
        <dbReference type="ChEBI" id="CHEBI:21137"/>
    </cofactor>
    <text evidence="1">Binds 1 [3Fe-4S] cluster.</text>
</comment>
<accession>Q1RH11</accession>
<keyword id="KW-0003">3Fe-4S</keyword>
<keyword id="KW-0004">4Fe-4S</keyword>
<keyword id="KW-0249">Electron transport</keyword>
<keyword id="KW-0408">Iron</keyword>
<keyword id="KW-0411">Iron-sulfur</keyword>
<keyword id="KW-0479">Metal-binding</keyword>
<keyword id="KW-0677">Repeat</keyword>
<keyword id="KW-0813">Transport</keyword>
<sequence>MTYVVTDECVKCKYTDCVEVCPVDCFYEGEFMLVINPDECIDCGVCVPDCPIDAIKPETPELIEWVERAKHFIEHEKWQVITKKKPALPDADKFKDEKDKFNKYIGV</sequence>
<feature type="initiator methionine" description="Removed" evidence="1">
    <location>
        <position position="1"/>
    </location>
</feature>
<feature type="chain" id="PRO_0000280962" description="Ferredoxin">
    <location>
        <begin position="2"/>
        <end position="107"/>
    </location>
</feature>
<feature type="domain" description="4Fe-4S ferredoxin-type 1" evidence="2">
    <location>
        <begin position="2"/>
        <end position="30"/>
    </location>
</feature>
<feature type="domain" description="4Fe-4S ferredoxin-type 2" evidence="2">
    <location>
        <begin position="31"/>
        <end position="60"/>
    </location>
</feature>
<feature type="binding site" evidence="1">
    <location>
        <position position="9"/>
    </location>
    <ligand>
        <name>[3Fe-4S] cluster</name>
        <dbReference type="ChEBI" id="CHEBI:21137"/>
    </ligand>
</feature>
<feature type="binding site" evidence="1">
    <location>
        <position position="17"/>
    </location>
    <ligand>
        <name>[3Fe-4S] cluster</name>
        <dbReference type="ChEBI" id="CHEBI:21137"/>
    </ligand>
</feature>
<feature type="binding site" evidence="1">
    <location>
        <position position="21"/>
    </location>
    <ligand>
        <name>[4Fe-4S] cluster</name>
        <dbReference type="ChEBI" id="CHEBI:49883"/>
    </ligand>
</feature>
<feature type="binding site" evidence="1">
    <location>
        <position position="40"/>
    </location>
    <ligand>
        <name>[4Fe-4S] cluster</name>
        <dbReference type="ChEBI" id="CHEBI:49883"/>
    </ligand>
</feature>
<feature type="binding site" evidence="1">
    <location>
        <position position="43"/>
    </location>
    <ligand>
        <name>[4Fe-4S] cluster</name>
        <dbReference type="ChEBI" id="CHEBI:49883"/>
    </ligand>
</feature>
<feature type="binding site" evidence="1">
    <location>
        <position position="46"/>
    </location>
    <ligand>
        <name>[4Fe-4S] cluster</name>
        <dbReference type="ChEBI" id="CHEBI:49883"/>
    </ligand>
</feature>
<feature type="binding site" evidence="1">
    <location>
        <position position="50"/>
    </location>
    <ligand>
        <name>[3Fe-4S] cluster</name>
        <dbReference type="ChEBI" id="CHEBI:21137"/>
    </ligand>
</feature>
<evidence type="ECO:0000250" key="1"/>
<evidence type="ECO:0000255" key="2">
    <source>
        <dbReference type="PROSITE-ProRule" id="PRU00711"/>
    </source>
</evidence>
<gene>
    <name type="primary">fdxA</name>
    <name type="ordered locus">RBE_1272</name>
</gene>
<dbReference type="EMBL" id="CP000087">
    <property type="protein sequence ID" value="ABE05353.1"/>
    <property type="molecule type" value="Genomic_DNA"/>
</dbReference>
<dbReference type="RefSeq" id="WP_011477924.1">
    <property type="nucleotide sequence ID" value="NC_007940.1"/>
</dbReference>
<dbReference type="SMR" id="Q1RH11"/>
<dbReference type="KEGG" id="rbe:RBE_1272"/>
<dbReference type="eggNOG" id="COG1146">
    <property type="taxonomic scope" value="Bacteria"/>
</dbReference>
<dbReference type="HOGENOM" id="CLU_139698_0_0_5"/>
<dbReference type="OrthoDB" id="9803397at2"/>
<dbReference type="Proteomes" id="UP000001951">
    <property type="component" value="Chromosome"/>
</dbReference>
<dbReference type="GO" id="GO:0051538">
    <property type="term" value="F:3 iron, 4 sulfur cluster binding"/>
    <property type="evidence" value="ECO:0007669"/>
    <property type="project" value="UniProtKB-KW"/>
</dbReference>
<dbReference type="GO" id="GO:0051539">
    <property type="term" value="F:4 iron, 4 sulfur cluster binding"/>
    <property type="evidence" value="ECO:0007669"/>
    <property type="project" value="UniProtKB-KW"/>
</dbReference>
<dbReference type="GO" id="GO:0009055">
    <property type="term" value="F:electron transfer activity"/>
    <property type="evidence" value="ECO:0007669"/>
    <property type="project" value="InterPro"/>
</dbReference>
<dbReference type="GO" id="GO:0046872">
    <property type="term" value="F:metal ion binding"/>
    <property type="evidence" value="ECO:0007669"/>
    <property type="project" value="UniProtKB-KW"/>
</dbReference>
<dbReference type="Gene3D" id="3.30.70.20">
    <property type="match status" value="1"/>
</dbReference>
<dbReference type="InterPro" id="IPR017896">
    <property type="entry name" value="4Fe4S_Fe-S-bd"/>
</dbReference>
<dbReference type="InterPro" id="IPR017900">
    <property type="entry name" value="4Fe4S_Fe_S_CS"/>
</dbReference>
<dbReference type="InterPro" id="IPR000813">
    <property type="entry name" value="7Fe_ferredoxin"/>
</dbReference>
<dbReference type="InterPro" id="IPR022569">
    <property type="entry name" value="Fd_C"/>
</dbReference>
<dbReference type="InterPro" id="IPR054829">
    <property type="entry name" value="FdxA"/>
</dbReference>
<dbReference type="InterPro" id="IPR050294">
    <property type="entry name" value="RnfB_subfamily"/>
</dbReference>
<dbReference type="NCBIfam" id="NF045490">
    <property type="entry name" value="FdxA_Protbact"/>
    <property type="match status" value="1"/>
</dbReference>
<dbReference type="PANTHER" id="PTHR42859:SF2">
    <property type="entry name" value="FERREDOXIN"/>
    <property type="match status" value="1"/>
</dbReference>
<dbReference type="PANTHER" id="PTHR42859">
    <property type="entry name" value="OXIDOREDUCTASE"/>
    <property type="match status" value="1"/>
</dbReference>
<dbReference type="Pfam" id="PF11953">
    <property type="entry name" value="DUF3470"/>
    <property type="match status" value="1"/>
</dbReference>
<dbReference type="Pfam" id="PF00037">
    <property type="entry name" value="Fer4"/>
    <property type="match status" value="1"/>
</dbReference>
<dbReference type="PRINTS" id="PR00354">
    <property type="entry name" value="7FE8SFRDOXIN"/>
</dbReference>
<dbReference type="SUPFAM" id="SSF54862">
    <property type="entry name" value="4Fe-4S ferredoxins"/>
    <property type="match status" value="1"/>
</dbReference>
<dbReference type="PROSITE" id="PS00198">
    <property type="entry name" value="4FE4S_FER_1"/>
    <property type="match status" value="1"/>
</dbReference>
<dbReference type="PROSITE" id="PS51379">
    <property type="entry name" value="4FE4S_FER_2"/>
    <property type="match status" value="2"/>
</dbReference>
<organism>
    <name type="scientific">Rickettsia bellii (strain RML369-C)</name>
    <dbReference type="NCBI Taxonomy" id="336407"/>
    <lineage>
        <taxon>Bacteria</taxon>
        <taxon>Pseudomonadati</taxon>
        <taxon>Pseudomonadota</taxon>
        <taxon>Alphaproteobacteria</taxon>
        <taxon>Rickettsiales</taxon>
        <taxon>Rickettsiaceae</taxon>
        <taxon>Rickettsieae</taxon>
        <taxon>Rickettsia</taxon>
        <taxon>belli group</taxon>
    </lineage>
</organism>
<name>FER_RICBR</name>
<protein>
    <recommendedName>
        <fullName>Ferredoxin</fullName>
    </recommendedName>
</protein>